<reference key="1">
    <citation type="journal article" date="2011" name="BMC Genomics">
        <title>Complete genome sequence of the filamentous anoxygenic phototrophic bacterium Chloroflexus aurantiacus.</title>
        <authorList>
            <person name="Tang K.H."/>
            <person name="Barry K."/>
            <person name="Chertkov O."/>
            <person name="Dalin E."/>
            <person name="Han C.S."/>
            <person name="Hauser L.J."/>
            <person name="Honchak B.M."/>
            <person name="Karbach L.E."/>
            <person name="Land M.L."/>
            <person name="Lapidus A."/>
            <person name="Larimer F.W."/>
            <person name="Mikhailova N."/>
            <person name="Pitluck S."/>
            <person name="Pierson B.K."/>
            <person name="Blankenship R.E."/>
        </authorList>
    </citation>
    <scope>NUCLEOTIDE SEQUENCE [LARGE SCALE GENOMIC DNA]</scope>
    <source>
        <strain>ATCC 29366 / DSM 635 / J-10-fl</strain>
    </source>
</reference>
<comment type="function">
    <text evidence="1">Catalyzes the condensation of carbamoyl phosphate and aspartate to form carbamoyl aspartate and inorganic phosphate, the committed step in the de novo pyrimidine nucleotide biosynthesis pathway.</text>
</comment>
<comment type="catalytic activity">
    <reaction evidence="1">
        <text>carbamoyl phosphate + L-aspartate = N-carbamoyl-L-aspartate + phosphate + H(+)</text>
        <dbReference type="Rhea" id="RHEA:20013"/>
        <dbReference type="ChEBI" id="CHEBI:15378"/>
        <dbReference type="ChEBI" id="CHEBI:29991"/>
        <dbReference type="ChEBI" id="CHEBI:32814"/>
        <dbReference type="ChEBI" id="CHEBI:43474"/>
        <dbReference type="ChEBI" id="CHEBI:58228"/>
        <dbReference type="EC" id="2.1.3.2"/>
    </reaction>
</comment>
<comment type="pathway">
    <text evidence="1">Pyrimidine metabolism; UMP biosynthesis via de novo pathway; (S)-dihydroorotate from bicarbonate: step 2/3.</text>
</comment>
<comment type="subunit">
    <text evidence="1">Heterododecamer (2C3:3R2) of six catalytic PyrB chains organized as two trimers (C3), and six regulatory PyrI chains organized as three dimers (R2).</text>
</comment>
<comment type="similarity">
    <text evidence="1">Belongs to the aspartate/ornithine carbamoyltransferase superfamily. ATCase family.</text>
</comment>
<proteinExistence type="inferred from homology"/>
<protein>
    <recommendedName>
        <fullName evidence="1">Aspartate carbamoyltransferase catalytic subunit</fullName>
        <ecNumber evidence="1">2.1.3.2</ecNumber>
    </recommendedName>
    <alternativeName>
        <fullName evidence="1">Aspartate transcarbamylase</fullName>
        <shortName evidence="1">ATCase</shortName>
    </alternativeName>
</protein>
<gene>
    <name evidence="1" type="primary">pyrB</name>
    <name type="ordered locus">Caur_1891</name>
</gene>
<evidence type="ECO:0000255" key="1">
    <source>
        <dbReference type="HAMAP-Rule" id="MF_00001"/>
    </source>
</evidence>
<dbReference type="EC" id="2.1.3.2" evidence="1"/>
<dbReference type="EMBL" id="CP000909">
    <property type="protein sequence ID" value="ABY35106.1"/>
    <property type="molecule type" value="Genomic_DNA"/>
</dbReference>
<dbReference type="RefSeq" id="WP_012257760.1">
    <property type="nucleotide sequence ID" value="NC_010175.1"/>
</dbReference>
<dbReference type="RefSeq" id="YP_001635495.1">
    <property type="nucleotide sequence ID" value="NC_010175.1"/>
</dbReference>
<dbReference type="SMR" id="A9WDU7"/>
<dbReference type="FunCoup" id="A9WDU7">
    <property type="interactions" value="472"/>
</dbReference>
<dbReference type="STRING" id="324602.Caur_1891"/>
<dbReference type="EnsemblBacteria" id="ABY35106">
    <property type="protein sequence ID" value="ABY35106"/>
    <property type="gene ID" value="Caur_1891"/>
</dbReference>
<dbReference type="KEGG" id="cau:Caur_1891"/>
<dbReference type="PATRIC" id="fig|324602.8.peg.2160"/>
<dbReference type="eggNOG" id="COG0540">
    <property type="taxonomic scope" value="Bacteria"/>
</dbReference>
<dbReference type="HOGENOM" id="CLU_043846_2_0_0"/>
<dbReference type="InParanoid" id="A9WDU7"/>
<dbReference type="UniPathway" id="UPA00070">
    <property type="reaction ID" value="UER00116"/>
</dbReference>
<dbReference type="Proteomes" id="UP000002008">
    <property type="component" value="Chromosome"/>
</dbReference>
<dbReference type="GO" id="GO:0016597">
    <property type="term" value="F:amino acid binding"/>
    <property type="evidence" value="ECO:0007669"/>
    <property type="project" value="InterPro"/>
</dbReference>
<dbReference type="GO" id="GO:0004070">
    <property type="term" value="F:aspartate carbamoyltransferase activity"/>
    <property type="evidence" value="ECO:0007669"/>
    <property type="project" value="UniProtKB-UniRule"/>
</dbReference>
<dbReference type="GO" id="GO:0006207">
    <property type="term" value="P:'de novo' pyrimidine nucleobase biosynthetic process"/>
    <property type="evidence" value="ECO:0007669"/>
    <property type="project" value="InterPro"/>
</dbReference>
<dbReference type="GO" id="GO:0044205">
    <property type="term" value="P:'de novo' UMP biosynthetic process"/>
    <property type="evidence" value="ECO:0007669"/>
    <property type="project" value="UniProtKB-UniRule"/>
</dbReference>
<dbReference type="GO" id="GO:0006520">
    <property type="term" value="P:amino acid metabolic process"/>
    <property type="evidence" value="ECO:0007669"/>
    <property type="project" value="InterPro"/>
</dbReference>
<dbReference type="FunFam" id="3.40.50.1370:FF:000007">
    <property type="entry name" value="Aspartate carbamoyltransferase"/>
    <property type="match status" value="1"/>
</dbReference>
<dbReference type="Gene3D" id="3.40.50.1370">
    <property type="entry name" value="Aspartate/ornithine carbamoyltransferase"/>
    <property type="match status" value="2"/>
</dbReference>
<dbReference type="HAMAP" id="MF_00001">
    <property type="entry name" value="Asp_carb_tr"/>
    <property type="match status" value="1"/>
</dbReference>
<dbReference type="InterPro" id="IPR006132">
    <property type="entry name" value="Asp/Orn_carbamoyltranf_P-bd"/>
</dbReference>
<dbReference type="InterPro" id="IPR006130">
    <property type="entry name" value="Asp/Orn_carbamoylTrfase"/>
</dbReference>
<dbReference type="InterPro" id="IPR036901">
    <property type="entry name" value="Asp/Orn_carbamoylTrfase_sf"/>
</dbReference>
<dbReference type="InterPro" id="IPR002082">
    <property type="entry name" value="Asp_carbamoyltransf"/>
</dbReference>
<dbReference type="InterPro" id="IPR006131">
    <property type="entry name" value="Asp_carbamoyltransf_Asp/Orn-bd"/>
</dbReference>
<dbReference type="NCBIfam" id="TIGR00670">
    <property type="entry name" value="asp_carb_tr"/>
    <property type="match status" value="1"/>
</dbReference>
<dbReference type="NCBIfam" id="NF002032">
    <property type="entry name" value="PRK00856.1"/>
    <property type="match status" value="1"/>
</dbReference>
<dbReference type="PANTHER" id="PTHR45753:SF6">
    <property type="entry name" value="ASPARTATE CARBAMOYLTRANSFERASE"/>
    <property type="match status" value="1"/>
</dbReference>
<dbReference type="PANTHER" id="PTHR45753">
    <property type="entry name" value="ORNITHINE CARBAMOYLTRANSFERASE, MITOCHONDRIAL"/>
    <property type="match status" value="1"/>
</dbReference>
<dbReference type="Pfam" id="PF00185">
    <property type="entry name" value="OTCace"/>
    <property type="match status" value="1"/>
</dbReference>
<dbReference type="Pfam" id="PF02729">
    <property type="entry name" value="OTCace_N"/>
    <property type="match status" value="1"/>
</dbReference>
<dbReference type="PRINTS" id="PR00100">
    <property type="entry name" value="AOTCASE"/>
</dbReference>
<dbReference type="PRINTS" id="PR00101">
    <property type="entry name" value="ATCASE"/>
</dbReference>
<dbReference type="SUPFAM" id="SSF53671">
    <property type="entry name" value="Aspartate/ornithine carbamoyltransferase"/>
    <property type="match status" value="1"/>
</dbReference>
<dbReference type="PROSITE" id="PS00097">
    <property type="entry name" value="CARBAMOYLTRANSFERASE"/>
    <property type="match status" value="1"/>
</dbReference>
<keyword id="KW-0665">Pyrimidine biosynthesis</keyword>
<keyword id="KW-1185">Reference proteome</keyword>
<keyword id="KW-0808">Transferase</keyword>
<organism>
    <name type="scientific">Chloroflexus aurantiacus (strain ATCC 29366 / DSM 635 / J-10-fl)</name>
    <dbReference type="NCBI Taxonomy" id="324602"/>
    <lineage>
        <taxon>Bacteria</taxon>
        <taxon>Bacillati</taxon>
        <taxon>Chloroflexota</taxon>
        <taxon>Chloroflexia</taxon>
        <taxon>Chloroflexales</taxon>
        <taxon>Chloroflexineae</taxon>
        <taxon>Chloroflexaceae</taxon>
        <taxon>Chloroflexus</taxon>
    </lineage>
</organism>
<sequence length="308" mass="34064">MTELRRHAIDLDNFSATEIEEILETAESMREVLSREIKQVPALRGKTVVNMFFEESTRTRISFELAARALSANVVAFTARGSSVEKGESLVDTVRTLQALGADIIVMRHSQSGAPYLVARHFRGSLINAGDGRHAHPTQALLDLYTMQSRLGQIRDLHVVIVGDILHSRVVRSNLWGLTRLGARVTLCGPPTLIGPAAFWTATWPQVRIAYELDPLLPEADVVMALRLQKERMQSGLLPALREYTRIYGLTSERLARLPSHAIVMHPGPMNEGIEIFPEVATASPAVIEEQVTNGVAVRMALLYRMAG</sequence>
<accession>A9WDU7</accession>
<name>PYRB_CHLAA</name>
<feature type="chain" id="PRO_0000329104" description="Aspartate carbamoyltransferase catalytic subunit">
    <location>
        <begin position="1"/>
        <end position="308"/>
    </location>
</feature>
<feature type="binding site" evidence="1">
    <location>
        <position position="58"/>
    </location>
    <ligand>
        <name>carbamoyl phosphate</name>
        <dbReference type="ChEBI" id="CHEBI:58228"/>
    </ligand>
</feature>
<feature type="binding site" evidence="1">
    <location>
        <position position="59"/>
    </location>
    <ligand>
        <name>carbamoyl phosphate</name>
        <dbReference type="ChEBI" id="CHEBI:58228"/>
    </ligand>
</feature>
<feature type="binding site" evidence="1">
    <location>
        <position position="86"/>
    </location>
    <ligand>
        <name>L-aspartate</name>
        <dbReference type="ChEBI" id="CHEBI:29991"/>
    </ligand>
</feature>
<feature type="binding site" evidence="1">
    <location>
        <position position="108"/>
    </location>
    <ligand>
        <name>carbamoyl phosphate</name>
        <dbReference type="ChEBI" id="CHEBI:58228"/>
    </ligand>
</feature>
<feature type="binding site" evidence="1">
    <location>
        <position position="136"/>
    </location>
    <ligand>
        <name>carbamoyl phosphate</name>
        <dbReference type="ChEBI" id="CHEBI:58228"/>
    </ligand>
</feature>
<feature type="binding site" evidence="1">
    <location>
        <position position="139"/>
    </location>
    <ligand>
        <name>carbamoyl phosphate</name>
        <dbReference type="ChEBI" id="CHEBI:58228"/>
    </ligand>
</feature>
<feature type="binding site" evidence="1">
    <location>
        <position position="169"/>
    </location>
    <ligand>
        <name>L-aspartate</name>
        <dbReference type="ChEBI" id="CHEBI:29991"/>
    </ligand>
</feature>
<feature type="binding site" evidence="1">
    <location>
        <position position="227"/>
    </location>
    <ligand>
        <name>L-aspartate</name>
        <dbReference type="ChEBI" id="CHEBI:29991"/>
    </ligand>
</feature>
<feature type="binding site" evidence="1">
    <location>
        <position position="268"/>
    </location>
    <ligand>
        <name>carbamoyl phosphate</name>
        <dbReference type="ChEBI" id="CHEBI:58228"/>
    </ligand>
</feature>
<feature type="binding site" evidence="1">
    <location>
        <position position="269"/>
    </location>
    <ligand>
        <name>carbamoyl phosphate</name>
        <dbReference type="ChEBI" id="CHEBI:58228"/>
    </ligand>
</feature>